<evidence type="ECO:0000255" key="1">
    <source>
        <dbReference type="HAMAP-Rule" id="MF_00031"/>
    </source>
</evidence>
<reference key="1">
    <citation type="journal article" date="2007" name="PLoS ONE">
        <title>A glimpse of streptococcal toxic shock syndrome from comparative genomics of S. suis 2 Chinese isolates.</title>
        <authorList>
            <person name="Chen C."/>
            <person name="Tang J."/>
            <person name="Dong W."/>
            <person name="Wang C."/>
            <person name="Feng Y."/>
            <person name="Wang J."/>
            <person name="Zheng F."/>
            <person name="Pan X."/>
            <person name="Liu D."/>
            <person name="Li M."/>
            <person name="Song Y."/>
            <person name="Zhu X."/>
            <person name="Sun H."/>
            <person name="Feng T."/>
            <person name="Guo Z."/>
            <person name="Ju A."/>
            <person name="Ge J."/>
            <person name="Dong Y."/>
            <person name="Sun W."/>
            <person name="Jiang Y."/>
            <person name="Wang J."/>
            <person name="Yan J."/>
            <person name="Yang H."/>
            <person name="Wang X."/>
            <person name="Gao G.F."/>
            <person name="Yang R."/>
            <person name="Wang J."/>
            <person name="Yu J."/>
        </authorList>
    </citation>
    <scope>NUCLEOTIDE SEQUENCE [LARGE SCALE GENOMIC DNA]</scope>
    <source>
        <strain>05ZYH33</strain>
    </source>
</reference>
<dbReference type="EMBL" id="CP000407">
    <property type="protein sequence ID" value="ABP89032.1"/>
    <property type="molecule type" value="Genomic_DNA"/>
</dbReference>
<dbReference type="SMR" id="A4VSE3"/>
<dbReference type="STRING" id="391295.SSU05_0060"/>
<dbReference type="KEGG" id="ssu:SSU05_0060"/>
<dbReference type="eggNOG" id="COG0632">
    <property type="taxonomic scope" value="Bacteria"/>
</dbReference>
<dbReference type="HOGENOM" id="CLU_087936_1_0_9"/>
<dbReference type="GO" id="GO:0005737">
    <property type="term" value="C:cytoplasm"/>
    <property type="evidence" value="ECO:0007669"/>
    <property type="project" value="UniProtKB-SubCell"/>
</dbReference>
<dbReference type="GO" id="GO:0009379">
    <property type="term" value="C:Holliday junction helicase complex"/>
    <property type="evidence" value="ECO:0007669"/>
    <property type="project" value="InterPro"/>
</dbReference>
<dbReference type="GO" id="GO:0048476">
    <property type="term" value="C:Holliday junction resolvase complex"/>
    <property type="evidence" value="ECO:0007669"/>
    <property type="project" value="UniProtKB-UniRule"/>
</dbReference>
<dbReference type="GO" id="GO:0005524">
    <property type="term" value="F:ATP binding"/>
    <property type="evidence" value="ECO:0007669"/>
    <property type="project" value="InterPro"/>
</dbReference>
<dbReference type="GO" id="GO:0000400">
    <property type="term" value="F:four-way junction DNA binding"/>
    <property type="evidence" value="ECO:0007669"/>
    <property type="project" value="UniProtKB-UniRule"/>
</dbReference>
<dbReference type="GO" id="GO:0009378">
    <property type="term" value="F:four-way junction helicase activity"/>
    <property type="evidence" value="ECO:0007669"/>
    <property type="project" value="InterPro"/>
</dbReference>
<dbReference type="GO" id="GO:0006310">
    <property type="term" value="P:DNA recombination"/>
    <property type="evidence" value="ECO:0007669"/>
    <property type="project" value="UniProtKB-UniRule"/>
</dbReference>
<dbReference type="GO" id="GO:0006281">
    <property type="term" value="P:DNA repair"/>
    <property type="evidence" value="ECO:0007669"/>
    <property type="project" value="UniProtKB-UniRule"/>
</dbReference>
<dbReference type="CDD" id="cd14332">
    <property type="entry name" value="UBA_RuvA_C"/>
    <property type="match status" value="1"/>
</dbReference>
<dbReference type="Gene3D" id="1.10.150.20">
    <property type="entry name" value="5' to 3' exonuclease, C-terminal subdomain"/>
    <property type="match status" value="1"/>
</dbReference>
<dbReference type="Gene3D" id="1.10.8.10">
    <property type="entry name" value="DNA helicase RuvA subunit, C-terminal domain"/>
    <property type="match status" value="1"/>
</dbReference>
<dbReference type="Gene3D" id="2.40.50.140">
    <property type="entry name" value="Nucleic acid-binding proteins"/>
    <property type="match status" value="1"/>
</dbReference>
<dbReference type="HAMAP" id="MF_00031">
    <property type="entry name" value="DNA_HJ_migration_RuvA"/>
    <property type="match status" value="1"/>
</dbReference>
<dbReference type="InterPro" id="IPR013849">
    <property type="entry name" value="DNA_helicase_Holl-junc_RuvA_I"/>
</dbReference>
<dbReference type="InterPro" id="IPR003583">
    <property type="entry name" value="Hlx-hairpin-Hlx_DNA-bd_motif"/>
</dbReference>
<dbReference type="InterPro" id="IPR012340">
    <property type="entry name" value="NA-bd_OB-fold"/>
</dbReference>
<dbReference type="InterPro" id="IPR000085">
    <property type="entry name" value="RuvA"/>
</dbReference>
<dbReference type="InterPro" id="IPR010994">
    <property type="entry name" value="RuvA_2-like"/>
</dbReference>
<dbReference type="InterPro" id="IPR011114">
    <property type="entry name" value="RuvA_C"/>
</dbReference>
<dbReference type="InterPro" id="IPR036267">
    <property type="entry name" value="RuvA_C_sf"/>
</dbReference>
<dbReference type="NCBIfam" id="TIGR00084">
    <property type="entry name" value="ruvA"/>
    <property type="match status" value="1"/>
</dbReference>
<dbReference type="Pfam" id="PF14520">
    <property type="entry name" value="HHH_5"/>
    <property type="match status" value="1"/>
</dbReference>
<dbReference type="Pfam" id="PF07499">
    <property type="entry name" value="RuvA_C"/>
    <property type="match status" value="1"/>
</dbReference>
<dbReference type="Pfam" id="PF01330">
    <property type="entry name" value="RuvA_N"/>
    <property type="match status" value="1"/>
</dbReference>
<dbReference type="SMART" id="SM00278">
    <property type="entry name" value="HhH1"/>
    <property type="match status" value="2"/>
</dbReference>
<dbReference type="SUPFAM" id="SSF46929">
    <property type="entry name" value="DNA helicase RuvA subunit, C-terminal domain"/>
    <property type="match status" value="1"/>
</dbReference>
<dbReference type="SUPFAM" id="SSF50249">
    <property type="entry name" value="Nucleic acid-binding proteins"/>
    <property type="match status" value="1"/>
</dbReference>
<dbReference type="SUPFAM" id="SSF47781">
    <property type="entry name" value="RuvA domain 2-like"/>
    <property type="match status" value="1"/>
</dbReference>
<organism>
    <name type="scientific">Streptococcus suis (strain 05ZYH33)</name>
    <dbReference type="NCBI Taxonomy" id="391295"/>
    <lineage>
        <taxon>Bacteria</taxon>
        <taxon>Bacillati</taxon>
        <taxon>Bacillota</taxon>
        <taxon>Bacilli</taxon>
        <taxon>Lactobacillales</taxon>
        <taxon>Streptococcaceae</taxon>
        <taxon>Streptococcus</taxon>
    </lineage>
</organism>
<keyword id="KW-0963">Cytoplasm</keyword>
<keyword id="KW-0227">DNA damage</keyword>
<keyword id="KW-0233">DNA recombination</keyword>
<keyword id="KW-0234">DNA repair</keyword>
<keyword id="KW-0238">DNA-binding</keyword>
<sequence>MYDYIKGILTKITAKYIVVETQGVGYILQVANPYAYSGQVQQEVTVYTHQVIREDAHLLYGFATENEKSVFLSLISVSGIGPTTALAIIAVDDNDGLVRAIEQKNITYLTKFPKIGKKTAQQMILDLEGKFVMSEEAGPVQQVAPSSENIALEEAMEAMEALGYRPAELKKIKKFFEGTNDTAENYIKSALKMLMK</sequence>
<proteinExistence type="inferred from homology"/>
<protein>
    <recommendedName>
        <fullName evidence="1">Holliday junction branch migration complex subunit RuvA</fullName>
    </recommendedName>
</protein>
<feature type="chain" id="PRO_1000002574" description="Holliday junction branch migration complex subunit RuvA">
    <location>
        <begin position="1"/>
        <end position="196"/>
    </location>
</feature>
<feature type="region of interest" description="Domain I" evidence="1">
    <location>
        <begin position="1"/>
        <end position="63"/>
    </location>
</feature>
<feature type="region of interest" description="Domain II" evidence="1">
    <location>
        <begin position="64"/>
        <end position="142"/>
    </location>
</feature>
<feature type="region of interest" description="Flexible linker" evidence="1">
    <location>
        <begin position="142"/>
        <end position="146"/>
    </location>
</feature>
<feature type="region of interest" description="Domain III" evidence="1">
    <location>
        <begin position="147"/>
        <end position="196"/>
    </location>
</feature>
<name>RUVA_STRSY</name>
<gene>
    <name evidence="1" type="primary">ruvA</name>
    <name type="ordered locus">SSU05_0060</name>
</gene>
<accession>A4VSE3</accession>
<comment type="function">
    <text evidence="1">The RuvA-RuvB-RuvC complex processes Holliday junction (HJ) DNA during genetic recombination and DNA repair, while the RuvA-RuvB complex plays an important role in the rescue of blocked DNA replication forks via replication fork reversal (RFR). RuvA specifically binds to HJ cruciform DNA, conferring on it an open structure. The RuvB hexamer acts as an ATP-dependent pump, pulling dsDNA into and through the RuvAB complex. HJ branch migration allows RuvC to scan DNA until it finds its consensus sequence, where it cleaves and resolves the cruciform DNA.</text>
</comment>
<comment type="subunit">
    <text evidence="1">Homotetramer. Forms an RuvA(8)-RuvB(12)-Holliday junction (HJ) complex. HJ DNA is sandwiched between 2 RuvA tetramers; dsDNA enters through RuvA and exits via RuvB. An RuvB hexamer assembles on each DNA strand where it exits the tetramer. Each RuvB hexamer is contacted by two RuvA subunits (via domain III) on 2 adjacent RuvB subunits; this complex drives branch migration. In the full resolvosome a probable DNA-RuvA(4)-RuvB(12)-RuvC(2) complex forms which resolves the HJ.</text>
</comment>
<comment type="subcellular location">
    <subcellularLocation>
        <location evidence="1">Cytoplasm</location>
    </subcellularLocation>
</comment>
<comment type="domain">
    <text evidence="1">Has three domains with a flexible linker between the domains II and III and assumes an 'L' shape. Domain III is highly mobile and contacts RuvB.</text>
</comment>
<comment type="similarity">
    <text evidence="1">Belongs to the RuvA family.</text>
</comment>